<dbReference type="EMBL" id="AF094582">
    <property type="protein sequence ID" value="AAC63377.1"/>
    <property type="molecule type" value="mRNA"/>
</dbReference>
<dbReference type="SMR" id="O77248"/>
<dbReference type="Proteomes" id="UP000301870">
    <property type="component" value="Unplaced"/>
</dbReference>
<dbReference type="GO" id="GO:0005576">
    <property type="term" value="C:extracellular region"/>
    <property type="evidence" value="ECO:0007669"/>
    <property type="project" value="UniProtKB-SubCell"/>
</dbReference>
<dbReference type="GO" id="GO:0008289">
    <property type="term" value="F:lipid binding"/>
    <property type="evidence" value="ECO:0007669"/>
    <property type="project" value="InterPro"/>
</dbReference>
<dbReference type="GO" id="GO:0006869">
    <property type="term" value="P:lipid transport"/>
    <property type="evidence" value="ECO:0007669"/>
    <property type="project" value="UniProtKB-KW"/>
</dbReference>
<dbReference type="CDD" id="cd13769">
    <property type="entry name" value="ApoLp-III_like"/>
    <property type="match status" value="1"/>
</dbReference>
<dbReference type="Gene3D" id="1.20.120.20">
    <property type="entry name" value="Apolipoprotein"/>
    <property type="match status" value="1"/>
</dbReference>
<dbReference type="InterPro" id="IPR010009">
    <property type="entry name" value="ApoLp-III"/>
</dbReference>
<dbReference type="Pfam" id="PF07464">
    <property type="entry name" value="ApoLp-III"/>
    <property type="match status" value="1"/>
</dbReference>
<dbReference type="SUPFAM" id="SSF47857">
    <property type="entry name" value="Apolipophorin-III"/>
    <property type="match status" value="1"/>
</dbReference>
<proteinExistence type="evidence at protein level"/>
<accession>O77248</accession>
<comment type="function">
    <text evidence="1">Assists in the loading of diacylglycerol, generated from triacylglycerol stores in the fat body through the action of adipokinetic hormone, into lipophorin, the hemolymph lipoprotein. It increases the lipid carrying capacity of lipophorin by covering the expanding hydrophobic surface resulting from diacylglycerol uptake. It thus plays a critical role in the transport of lipids during flight in several species of insects (By similarity).</text>
</comment>
<comment type="subunit">
    <text evidence="1">Equilibrium between a soluble monomer and a bound lipoprotein form. Apolipophorin-3 associates with lipophorin during lipid loading until each particle contains 9 or 14 molecules of apolipophorin-3 (By similarity).</text>
</comment>
<comment type="subcellular location">
    <subcellularLocation>
        <location evidence="1">Secreted</location>
    </subcellularLocation>
</comment>
<comment type="tissue specificity">
    <text evidence="3">Expressed in fat body and secreted in hemolymph. Also expressed in ovary and testis at lower levels.</text>
</comment>
<comment type="similarity">
    <text evidence="4">Belongs to the insect apolipophorin-3 family.</text>
</comment>
<comment type="online information" name="Protein Spotlight">
    <link uri="https://www.proteinspotlight.org/back_issues/059"/>
    <text>Lipid freight - Issue 59 of June 2005</text>
</comment>
<reference key="1">
    <citation type="journal article" date="1998" name="Arch. Insect Biochem. Physiol.">
        <title>Cloning and expression of apolipophorin-III from the common cutworm, Spodoptera litura.</title>
        <authorList>
            <person name="Kim E."/>
            <person name="Kim S.H."/>
            <person name="Choi C.S."/>
            <person name="Park Y.I."/>
            <person name="Kim H.R."/>
        </authorList>
    </citation>
    <scope>NUCLEOTIDE SEQUENCE [MRNA]</scope>
    <scope>PROTEIN SEQUENCE OF 23-28</scope>
    <scope>TISSUE SPECIFICITY</scope>
    <source>
        <tissue>Fat body</tissue>
    </source>
</reference>
<evidence type="ECO:0000250" key="1"/>
<evidence type="ECO:0000255" key="2"/>
<evidence type="ECO:0000269" key="3">
    <source>
    </source>
</evidence>
<evidence type="ECO:0000305" key="4"/>
<organism>
    <name type="scientific">Spodoptera litura</name>
    <name type="common">Asian cotton leafworm</name>
    <dbReference type="NCBI Taxonomy" id="69820"/>
    <lineage>
        <taxon>Eukaryota</taxon>
        <taxon>Metazoa</taxon>
        <taxon>Ecdysozoa</taxon>
        <taxon>Arthropoda</taxon>
        <taxon>Hexapoda</taxon>
        <taxon>Insecta</taxon>
        <taxon>Pterygota</taxon>
        <taxon>Neoptera</taxon>
        <taxon>Endopterygota</taxon>
        <taxon>Lepidoptera</taxon>
        <taxon>Glossata</taxon>
        <taxon>Ditrysia</taxon>
        <taxon>Noctuoidea</taxon>
        <taxon>Noctuidae</taxon>
        <taxon>Amphipyrinae</taxon>
        <taxon>Spodoptera</taxon>
    </lineage>
</organism>
<protein>
    <recommendedName>
        <fullName>Apolipophorin-3</fullName>
    </recommendedName>
    <alternativeName>
        <fullName>Apolipophorin-III</fullName>
        <shortName>ApoLp-III</shortName>
    </alternativeName>
</protein>
<keyword id="KW-0165">Cleavage on pair of basic residues</keyword>
<keyword id="KW-0903">Direct protein sequencing</keyword>
<keyword id="KW-0445">Lipid transport</keyword>
<keyword id="KW-1185">Reference proteome</keyword>
<keyword id="KW-0964">Secreted</keyword>
<keyword id="KW-0732">Signal</keyword>
<keyword id="KW-0813">Transport</keyword>
<feature type="signal peptide" evidence="2">
    <location>
        <begin position="1"/>
        <end position="17"/>
    </location>
</feature>
<feature type="propeptide" id="PRO_0000002049" evidence="3">
    <location>
        <begin position="18"/>
        <end position="22"/>
    </location>
</feature>
<feature type="chain" id="PRO_0000002050" description="Apolipophorin-3">
    <location>
        <begin position="23"/>
        <end position="188"/>
    </location>
</feature>
<sequence length="188" mass="20649">MVAKLFVLVACIALSHAAMVRRDAPPANTLLQDIEKHAAEIHKTFSEQLNSIANSKNTQEVNKAIKDGSDSVLQQLSALSSSLQSAMTDANAKAKTALEQARQNLEKTAEDLRKSHPDVERQAGELRTKLQAAVQNTAQEVQKLAKEVASNVEETNEKLAPKLKEAYENFSKHVEEVQKKVHEAASKQ</sequence>
<name>APL3_SPOLT</name>